<organism>
    <name type="scientific">Drosophila persimilis</name>
    <name type="common">Fruit fly</name>
    <dbReference type="NCBI Taxonomy" id="7234"/>
    <lineage>
        <taxon>Eukaryota</taxon>
        <taxon>Metazoa</taxon>
        <taxon>Ecdysozoa</taxon>
        <taxon>Arthropoda</taxon>
        <taxon>Hexapoda</taxon>
        <taxon>Insecta</taxon>
        <taxon>Pterygota</taxon>
        <taxon>Neoptera</taxon>
        <taxon>Endopterygota</taxon>
        <taxon>Diptera</taxon>
        <taxon>Brachycera</taxon>
        <taxon>Muscomorpha</taxon>
        <taxon>Ephydroidea</taxon>
        <taxon>Drosophilidae</taxon>
        <taxon>Drosophila</taxon>
        <taxon>Sophophora</taxon>
    </lineage>
</organism>
<comment type="function">
    <text evidence="1">Required for association of the cohesin complex with chromatin during interphase. Plays a role in sister chromatid cohesion and normal progression through prometaphase (By similarity).</text>
</comment>
<comment type="subunit">
    <text evidence="1">Interacts with Nipped-B to form the cohesin loading complex.</text>
</comment>
<comment type="subcellular location">
    <subcellularLocation>
        <location evidence="1">Nucleus</location>
        <location evidence="1">Nucleoplasm</location>
    </subcellularLocation>
    <text evidence="1">Binds to chromatin from the end of mitosis until prophase.</text>
</comment>
<comment type="similarity">
    <text evidence="2">Belongs to the SCC4/mau-2 family.</text>
</comment>
<keyword id="KW-0131">Cell cycle</keyword>
<keyword id="KW-0132">Cell division</keyword>
<keyword id="KW-0159">Chromosome partition</keyword>
<keyword id="KW-0498">Mitosis</keyword>
<keyword id="KW-0539">Nucleus</keyword>
<keyword id="KW-1185">Reference proteome</keyword>
<keyword id="KW-0677">Repeat</keyword>
<keyword id="KW-0802">TPR repeat</keyword>
<name>SCC4_DROPE</name>
<sequence>MSTTNTAAASQDACYISLLGLAEYFRTSQPPNVKKCIQCLQALFTFTPPSKVEARTHLQMGQILMAYTKNIDMARQHLEKAWNIAEPLMNFDDVKFDTASVLAQLHLQTDQSSHTAKAMLRRAVELSQHNVYWHCKLLLQLSQIHASDREYSLASELLAVGAESAEEAGATYLKVLFLLSRAMILMIERKTNDVLALLNTAGQIIDNNIPNPHQKEYLKVFFLVLQVCYYLALGQVKTVKPSLKQLQMSIQTIMAPNWPTDEAIFGANQLEMFVWLPKEQLYVLVYLVTVSHSMMAGYMDKAQKYTEKALTQIEKLKMQEDKPILSVFKVILLEHIVMCRMVMGNRELAIREIAAARDVCLAVPHRSLLKRHSAQLHCLIGLYSMSTSFFEHAERQFLVCVNETTERDLKLFANLNLAIIYLRTKRDADLKQILDAVSTENTHTYSSQALMGGFYYVQGLHAFHKNSFHEAKRFLRETLKMANAEDLNRLTSCSLVLLSHVFLSIGNSKESMNMVTPAMQLASKIPDIHVQLWGSAILKDLHRMSKDAQHEKDAYANHVKYSENLIADQRKCVQSAHHELVNWFQGDPPVTSGAAALILSEIPTTSALQPTTGQQFGQFY</sequence>
<evidence type="ECO:0000250" key="1"/>
<evidence type="ECO:0000305" key="2"/>
<reference key="1">
    <citation type="journal article" date="2007" name="Nature">
        <title>Evolution of genes and genomes on the Drosophila phylogeny.</title>
        <authorList>
            <consortium name="Drosophila 12 genomes consortium"/>
        </authorList>
    </citation>
    <scope>NUCLEOTIDE SEQUENCE [LARGE SCALE GENOMIC DNA]</scope>
    <source>
        <strain>MSH-3 / Tucson 14011-0111.49</strain>
    </source>
</reference>
<protein>
    <recommendedName>
        <fullName>MAU2 chromatid cohesion factor homolog</fullName>
    </recommendedName>
    <alternativeName>
        <fullName>Cohesin loading complex subunit SCC4 homolog</fullName>
    </alternativeName>
</protein>
<feature type="chain" id="PRO_0000382734" description="MAU2 chromatid cohesion factor homolog">
    <location>
        <begin position="1"/>
        <end position="620"/>
    </location>
</feature>
<feature type="repeat" description="TPR 1">
    <location>
        <begin position="452"/>
        <end position="485"/>
    </location>
</feature>
<feature type="repeat" description="TPR 2">
    <location>
        <begin position="492"/>
        <end position="525"/>
    </location>
</feature>
<dbReference type="EMBL" id="CH479182">
    <property type="protein sequence ID" value="EDW34234.1"/>
    <property type="molecule type" value="Genomic_DNA"/>
</dbReference>
<dbReference type="STRING" id="7234.B4GF49"/>
<dbReference type="EnsemblMetazoa" id="FBtr0187755">
    <property type="protein sequence ID" value="FBpp0186247"/>
    <property type="gene ID" value="FBgn0159732"/>
</dbReference>
<dbReference type="EnsemblMetazoa" id="XM_002017098.2">
    <property type="protein sequence ID" value="XP_002017134.1"/>
    <property type="gene ID" value="LOC6591773"/>
</dbReference>
<dbReference type="GeneID" id="6591773"/>
<dbReference type="KEGG" id="dpe:6591773"/>
<dbReference type="CTD" id="23383"/>
<dbReference type="eggNOG" id="KOG2300">
    <property type="taxonomic scope" value="Eukaryota"/>
</dbReference>
<dbReference type="HOGENOM" id="CLU_030238_0_0_1"/>
<dbReference type="OMA" id="QDAWYLS"/>
<dbReference type="OrthoDB" id="5565328at2759"/>
<dbReference type="PhylomeDB" id="B4GF49"/>
<dbReference type="Proteomes" id="UP000008744">
    <property type="component" value="Unassembled WGS sequence"/>
</dbReference>
<dbReference type="GO" id="GO:0000785">
    <property type="term" value="C:chromatin"/>
    <property type="evidence" value="ECO:0000250"/>
    <property type="project" value="UniProtKB"/>
</dbReference>
<dbReference type="GO" id="GO:0005654">
    <property type="term" value="C:nucleoplasm"/>
    <property type="evidence" value="ECO:0000250"/>
    <property type="project" value="UniProtKB"/>
</dbReference>
<dbReference type="GO" id="GO:0005634">
    <property type="term" value="C:nucleus"/>
    <property type="evidence" value="ECO:0000250"/>
    <property type="project" value="UniProtKB"/>
</dbReference>
<dbReference type="GO" id="GO:0032116">
    <property type="term" value="C:SMC loading complex"/>
    <property type="evidence" value="ECO:0000250"/>
    <property type="project" value="UniProtKB"/>
</dbReference>
<dbReference type="GO" id="GO:0051301">
    <property type="term" value="P:cell division"/>
    <property type="evidence" value="ECO:0007669"/>
    <property type="project" value="UniProtKB-KW"/>
</dbReference>
<dbReference type="GO" id="GO:0007059">
    <property type="term" value="P:chromosome segregation"/>
    <property type="evidence" value="ECO:0007669"/>
    <property type="project" value="UniProtKB-KW"/>
</dbReference>
<dbReference type="GO" id="GO:0034088">
    <property type="term" value="P:maintenance of mitotic sister chromatid cohesion"/>
    <property type="evidence" value="ECO:0000250"/>
    <property type="project" value="UniProtKB"/>
</dbReference>
<dbReference type="FunFam" id="1.25.40.10:FF:000373">
    <property type="entry name" value="MAU2 chromatid cohesion factor homolog"/>
    <property type="match status" value="1"/>
</dbReference>
<dbReference type="FunFam" id="1.25.40.10:FF:000915">
    <property type="entry name" value="MAU2 chromatid cohesion factor homolog"/>
    <property type="match status" value="1"/>
</dbReference>
<dbReference type="Gene3D" id="1.25.40.10">
    <property type="entry name" value="Tetratricopeptide repeat domain"/>
    <property type="match status" value="2"/>
</dbReference>
<dbReference type="InterPro" id="IPR019440">
    <property type="entry name" value="MAU2"/>
</dbReference>
<dbReference type="InterPro" id="IPR011990">
    <property type="entry name" value="TPR-like_helical_dom_sf"/>
</dbReference>
<dbReference type="PANTHER" id="PTHR21394">
    <property type="entry name" value="MAU2 CHROMATID COHESION FACTOR HOMOLOG"/>
    <property type="match status" value="1"/>
</dbReference>
<dbReference type="Pfam" id="PF10345">
    <property type="entry name" value="Cohesin_load"/>
    <property type="match status" value="1"/>
</dbReference>
<proteinExistence type="inferred from homology"/>
<accession>B4GF49</accession>
<gene>
    <name type="ORF">GL22140</name>
</gene>